<protein>
    <recommendedName>
        <fullName>Vitellogenesis-inhibiting hormone</fullName>
        <shortName>VIH</shortName>
    </recommendedName>
</protein>
<name>VIH_ARMVU</name>
<reference evidence="3" key="1">
    <citation type="journal article" date="1999" name="Gen. Comp. Endocrinol.">
        <title>Isolation and amino acid sequence of a peptide with vitellogenesis inhibiting activity from the terrestrial isopod Armadillidium vulgare (Crustacea).</title>
        <authorList>
            <person name="Greve P."/>
            <person name="Sorokine O."/>
            <person name="Berges T."/>
            <person name="Lacombe C."/>
            <person name="van Dorsselaer A."/>
            <person name="Martin G."/>
        </authorList>
    </citation>
    <scope>NUCLEOTIDE SEQUENCE OF 1-70</scope>
    <scope>PROTEIN SEQUENCE OF 1-40 AND 48-83</scope>
    <scope>FUNCTION</scope>
    <scope>DISULFIDE BONDS</scope>
    <scope>TISSUE SPECIFICITY</scope>
    <scope>MASS SPECTROMETRY</scope>
    <source>
        <tissue evidence="1">Sinus gland</tissue>
    </source>
</reference>
<reference evidence="3" key="2">
    <citation type="journal article" date="2003" name="Gen. Comp. Endocrinol.">
        <title>Localization of crustacean hyperglycemic and vitellogenesis-inhibiting hormones in separate cell types in the protocerebrum of the woodlouse Armadillidium vulgare (Crustacea, Isopoda).</title>
        <authorList>
            <person name="Azzouna A."/>
            <person name="Philippe M."/>
            <person name="Jarry T."/>
            <person name="Greve P."/>
            <person name="Martin G."/>
        </authorList>
    </citation>
    <scope>TISSUE SPECIFICITY</scope>
</reference>
<organism evidence="3">
    <name type="scientific">Armadillidium vulgare</name>
    <name type="common">Pillbug</name>
    <name type="synonym">Pill woodlouse</name>
    <dbReference type="NCBI Taxonomy" id="13347"/>
    <lineage>
        <taxon>Eukaryota</taxon>
        <taxon>Metazoa</taxon>
        <taxon>Ecdysozoa</taxon>
        <taxon>Arthropoda</taxon>
        <taxon>Crustacea</taxon>
        <taxon>Multicrustacea</taxon>
        <taxon>Malacostraca</taxon>
        <taxon>Eumalacostraca</taxon>
        <taxon>Peracarida</taxon>
        <taxon>Isopoda</taxon>
        <taxon>Oniscidea</taxon>
        <taxon>Crinocheta</taxon>
        <taxon>Armadillidiidae</taxon>
        <taxon>Armadillidium</taxon>
    </lineage>
</organism>
<feature type="chain" id="PRO_0000209868" description="Vitellogenesis-inhibiting hormone">
    <location>
        <begin position="1"/>
        <end position="83"/>
    </location>
</feature>
<feature type="disulfide bond" evidence="1">
    <location>
        <begin position="15"/>
        <end position="52"/>
    </location>
</feature>
<feature type="disulfide bond" evidence="1">
    <location>
        <begin position="32"/>
        <end position="48"/>
    </location>
</feature>
<feature type="disulfide bond" evidence="1">
    <location>
        <begin position="35"/>
        <end position="61"/>
    </location>
</feature>
<accession>P83627</accession>
<proteinExistence type="evidence at protein level"/>
<evidence type="ECO:0000269" key="1">
    <source>
    </source>
</evidence>
<evidence type="ECO:0000269" key="2">
    <source>
    </source>
</evidence>
<evidence type="ECO:0000305" key="3"/>
<dbReference type="SMR" id="P83627"/>
<dbReference type="GO" id="GO:0005576">
    <property type="term" value="C:extracellular region"/>
    <property type="evidence" value="ECO:0007669"/>
    <property type="project" value="UniProtKB-SubCell"/>
</dbReference>
<dbReference type="GO" id="GO:0005184">
    <property type="term" value="F:neuropeptide hormone activity"/>
    <property type="evidence" value="ECO:0000304"/>
    <property type="project" value="UniProtKB"/>
</dbReference>
<dbReference type="GO" id="GO:0007623">
    <property type="term" value="P:circadian rhythm"/>
    <property type="evidence" value="ECO:0007669"/>
    <property type="project" value="TreeGrafter"/>
</dbReference>
<dbReference type="GO" id="GO:0007218">
    <property type="term" value="P:neuropeptide signaling pathway"/>
    <property type="evidence" value="ECO:0000304"/>
    <property type="project" value="UniProtKB"/>
</dbReference>
<dbReference type="FunFam" id="1.10.2010.10:FF:000001">
    <property type="entry name" value="Ion transport peptide isoform C"/>
    <property type="match status" value="1"/>
</dbReference>
<dbReference type="Gene3D" id="1.10.2010.10">
    <property type="entry name" value="Crustacean CHH/MIH/GIH neurohormone"/>
    <property type="match status" value="1"/>
</dbReference>
<dbReference type="InterPro" id="IPR018251">
    <property type="entry name" value="Crust_neurhormone_CS"/>
</dbReference>
<dbReference type="InterPro" id="IPR031098">
    <property type="entry name" value="Crust_neurohorm"/>
</dbReference>
<dbReference type="InterPro" id="IPR035957">
    <property type="entry name" value="Crust_neurohorm_sf"/>
</dbReference>
<dbReference type="InterPro" id="IPR001166">
    <property type="entry name" value="Hyperglycemic"/>
</dbReference>
<dbReference type="PANTHER" id="PTHR35981">
    <property type="entry name" value="ION TRANSPORT PEPTIDE, ISOFORM C"/>
    <property type="match status" value="1"/>
</dbReference>
<dbReference type="PANTHER" id="PTHR35981:SF2">
    <property type="entry name" value="ION TRANSPORT PEPTIDE, ISOFORM C"/>
    <property type="match status" value="1"/>
</dbReference>
<dbReference type="Pfam" id="PF01147">
    <property type="entry name" value="Crust_neurohorm"/>
    <property type="match status" value="1"/>
</dbReference>
<dbReference type="PRINTS" id="PR00550">
    <property type="entry name" value="HYPRGLYCEMIC"/>
</dbReference>
<dbReference type="SUPFAM" id="SSF81778">
    <property type="entry name" value="Crustacean CHH/MIH/GIH neurohormone"/>
    <property type="match status" value="1"/>
</dbReference>
<dbReference type="PROSITE" id="PS01250">
    <property type="entry name" value="CHH_MIH_GIH"/>
    <property type="match status" value="1"/>
</dbReference>
<keyword id="KW-0903">Direct protein sequencing</keyword>
<keyword id="KW-1015">Disulfide bond</keyword>
<keyword id="KW-0372">Hormone</keyword>
<keyword id="KW-0527">Neuropeptide</keyword>
<keyword id="KW-0964">Secreted</keyword>
<sequence length="83" mass="9491">YNIPLGWGRRDMPGCLGVLGNRDLYDDVSRICSDCQNVFRDKNVESKCRSDCFSTSYFETCIMALDLAEKISDYKLHASILKE</sequence>
<comment type="function">
    <text evidence="1">Inhibits secondary vitellogenesis in females. Has no hyperglycemic or molt-inhibiting activity.</text>
</comment>
<comment type="subcellular location">
    <subcellularLocation>
        <location evidence="3">Secreted</location>
    </subcellularLocation>
</comment>
<comment type="tissue specificity">
    <text evidence="1 2">Found in the sinus glands of both male and female. Found also in the brain; the neuroendocrine structures of the protocerebrum.</text>
</comment>
<comment type="mass spectrometry" mass="9485.0" method="Electrospray" evidence="1"/>
<comment type="similarity">
    <text evidence="3">Belongs to the arthropod CHH/MIH/GIH/VIH hormone family.</text>
</comment>